<comment type="function">
    <text evidence="1">Forms part of the ribosomal stalk, playing a central role in the interaction of the ribosome with GTP-bound translation factors.</text>
</comment>
<comment type="subunit">
    <text evidence="1">Part of the ribosomal stalk of the 50S ribosomal subunit. The N-terminus interacts with L11 and the large rRNA to form the base of the stalk. The C-terminus forms an elongated spine to which L12 dimers bind in a sequential fashion forming a multimeric L10(L12)X complex.</text>
</comment>
<comment type="similarity">
    <text evidence="1">Belongs to the universal ribosomal protein uL10 family.</text>
</comment>
<gene>
    <name evidence="1" type="primary">rplJ</name>
    <name type="ordered locus">SFV_4057</name>
</gene>
<protein>
    <recommendedName>
        <fullName evidence="1">Large ribosomal subunit protein uL10</fullName>
    </recommendedName>
    <alternativeName>
        <fullName evidence="2">50S ribosomal protein L10</fullName>
    </alternativeName>
</protein>
<sequence>MALNLQDKQAIVAEVSEVAKGALSAVVADSRGVTVDKMTELRKAGREAGVYMRVVRNTLLRRAVEGTPFECLKDAFVGPTLIAYSMEHPGAAARLFKEFAKANAKFEVKAAAFEGELIPASQIDRLATLPTYEEAIARLMATMKEASAGKLVRTLAAVRDAKEAA</sequence>
<evidence type="ECO:0000255" key="1">
    <source>
        <dbReference type="HAMAP-Rule" id="MF_00362"/>
    </source>
</evidence>
<evidence type="ECO:0000305" key="2"/>
<reference key="1">
    <citation type="journal article" date="2006" name="BMC Genomics">
        <title>Complete genome sequence of Shigella flexneri 5b and comparison with Shigella flexneri 2a.</title>
        <authorList>
            <person name="Nie H."/>
            <person name="Yang F."/>
            <person name="Zhang X."/>
            <person name="Yang J."/>
            <person name="Chen L."/>
            <person name="Wang J."/>
            <person name="Xiong Z."/>
            <person name="Peng J."/>
            <person name="Sun L."/>
            <person name="Dong J."/>
            <person name="Xue Y."/>
            <person name="Xu X."/>
            <person name="Chen S."/>
            <person name="Yao Z."/>
            <person name="Shen Y."/>
            <person name="Jin Q."/>
        </authorList>
    </citation>
    <scope>NUCLEOTIDE SEQUENCE [LARGE SCALE GENOMIC DNA]</scope>
    <source>
        <strain>8401</strain>
    </source>
</reference>
<feature type="chain" id="PRO_1000005598" description="Large ribosomal subunit protein uL10">
    <location>
        <begin position="1"/>
        <end position="165"/>
    </location>
</feature>
<feature type="modified residue" description="N6-acetyllysine" evidence="1">
    <location>
        <position position="37"/>
    </location>
</feature>
<feature type="modified residue" description="N6-acetyllysine" evidence="1">
    <location>
        <position position="105"/>
    </location>
</feature>
<keyword id="KW-0007">Acetylation</keyword>
<keyword id="KW-0687">Ribonucleoprotein</keyword>
<keyword id="KW-0689">Ribosomal protein</keyword>
<keyword id="KW-0694">RNA-binding</keyword>
<keyword id="KW-0699">rRNA-binding</keyword>
<organism>
    <name type="scientific">Shigella flexneri serotype 5b (strain 8401)</name>
    <dbReference type="NCBI Taxonomy" id="373384"/>
    <lineage>
        <taxon>Bacteria</taxon>
        <taxon>Pseudomonadati</taxon>
        <taxon>Pseudomonadota</taxon>
        <taxon>Gammaproteobacteria</taxon>
        <taxon>Enterobacterales</taxon>
        <taxon>Enterobacteriaceae</taxon>
        <taxon>Shigella</taxon>
    </lineage>
</organism>
<dbReference type="EMBL" id="CP000266">
    <property type="protein sequence ID" value="ABF06050.1"/>
    <property type="molecule type" value="Genomic_DNA"/>
</dbReference>
<dbReference type="RefSeq" id="WP_001207201.1">
    <property type="nucleotide sequence ID" value="NC_008258.1"/>
</dbReference>
<dbReference type="SMR" id="Q0SY15"/>
<dbReference type="GeneID" id="93777909"/>
<dbReference type="KEGG" id="sfv:SFV_4057"/>
<dbReference type="HOGENOM" id="CLU_092227_0_2_6"/>
<dbReference type="Proteomes" id="UP000000659">
    <property type="component" value="Chromosome"/>
</dbReference>
<dbReference type="GO" id="GO:0015934">
    <property type="term" value="C:large ribosomal subunit"/>
    <property type="evidence" value="ECO:0007669"/>
    <property type="project" value="InterPro"/>
</dbReference>
<dbReference type="GO" id="GO:0070180">
    <property type="term" value="F:large ribosomal subunit rRNA binding"/>
    <property type="evidence" value="ECO:0007669"/>
    <property type="project" value="UniProtKB-UniRule"/>
</dbReference>
<dbReference type="GO" id="GO:0003735">
    <property type="term" value="F:structural constituent of ribosome"/>
    <property type="evidence" value="ECO:0007669"/>
    <property type="project" value="InterPro"/>
</dbReference>
<dbReference type="GO" id="GO:0006412">
    <property type="term" value="P:translation"/>
    <property type="evidence" value="ECO:0007669"/>
    <property type="project" value="UniProtKB-UniRule"/>
</dbReference>
<dbReference type="CDD" id="cd05797">
    <property type="entry name" value="Ribosomal_L10"/>
    <property type="match status" value="1"/>
</dbReference>
<dbReference type="FunFam" id="3.30.70.1730:FF:000001">
    <property type="entry name" value="50S ribosomal protein L10"/>
    <property type="match status" value="1"/>
</dbReference>
<dbReference type="Gene3D" id="3.30.70.1730">
    <property type="match status" value="1"/>
</dbReference>
<dbReference type="Gene3D" id="6.10.250.2350">
    <property type="match status" value="1"/>
</dbReference>
<dbReference type="HAMAP" id="MF_00362">
    <property type="entry name" value="Ribosomal_uL10"/>
    <property type="match status" value="1"/>
</dbReference>
<dbReference type="InterPro" id="IPR001790">
    <property type="entry name" value="Ribosomal_uL10"/>
</dbReference>
<dbReference type="InterPro" id="IPR043141">
    <property type="entry name" value="Ribosomal_uL10-like_sf"/>
</dbReference>
<dbReference type="InterPro" id="IPR022973">
    <property type="entry name" value="Ribosomal_uL10_bac"/>
</dbReference>
<dbReference type="InterPro" id="IPR047865">
    <property type="entry name" value="Ribosomal_uL10_bac_type"/>
</dbReference>
<dbReference type="InterPro" id="IPR002363">
    <property type="entry name" value="Ribosomal_uL10_CS_bac"/>
</dbReference>
<dbReference type="NCBIfam" id="NF000955">
    <property type="entry name" value="PRK00099.1-1"/>
    <property type="match status" value="1"/>
</dbReference>
<dbReference type="PANTHER" id="PTHR11560">
    <property type="entry name" value="39S RIBOSOMAL PROTEIN L10, MITOCHONDRIAL"/>
    <property type="match status" value="1"/>
</dbReference>
<dbReference type="Pfam" id="PF00466">
    <property type="entry name" value="Ribosomal_L10"/>
    <property type="match status" value="1"/>
</dbReference>
<dbReference type="SUPFAM" id="SSF160369">
    <property type="entry name" value="Ribosomal protein L10-like"/>
    <property type="match status" value="1"/>
</dbReference>
<dbReference type="PROSITE" id="PS01109">
    <property type="entry name" value="RIBOSOMAL_L10"/>
    <property type="match status" value="1"/>
</dbReference>
<accession>Q0SY15</accession>
<name>RL10_SHIF8</name>
<proteinExistence type="inferred from homology"/>